<dbReference type="EC" id="6.3.5.-" evidence="1"/>
<dbReference type="EMBL" id="CP001275">
    <property type="protein sequence ID" value="ACM04548.1"/>
    <property type="molecule type" value="Genomic_DNA"/>
</dbReference>
<dbReference type="RefSeq" id="WP_015922421.1">
    <property type="nucleotide sequence ID" value="NC_011959.1"/>
</dbReference>
<dbReference type="SMR" id="B9KZK4"/>
<dbReference type="STRING" id="309801.trd_1474"/>
<dbReference type="KEGG" id="tro:trd_1474"/>
<dbReference type="eggNOG" id="COG0064">
    <property type="taxonomic scope" value="Bacteria"/>
</dbReference>
<dbReference type="HOGENOM" id="CLU_019240_0_0_0"/>
<dbReference type="OrthoDB" id="9804078at2"/>
<dbReference type="Proteomes" id="UP000000447">
    <property type="component" value="Chromosome"/>
</dbReference>
<dbReference type="GO" id="GO:0050566">
    <property type="term" value="F:asparaginyl-tRNA synthase (glutamine-hydrolyzing) activity"/>
    <property type="evidence" value="ECO:0007669"/>
    <property type="project" value="RHEA"/>
</dbReference>
<dbReference type="GO" id="GO:0005524">
    <property type="term" value="F:ATP binding"/>
    <property type="evidence" value="ECO:0007669"/>
    <property type="project" value="UniProtKB-KW"/>
</dbReference>
<dbReference type="GO" id="GO:0050567">
    <property type="term" value="F:glutaminyl-tRNA synthase (glutamine-hydrolyzing) activity"/>
    <property type="evidence" value="ECO:0007669"/>
    <property type="project" value="UniProtKB-UniRule"/>
</dbReference>
<dbReference type="GO" id="GO:0070681">
    <property type="term" value="P:glutaminyl-tRNAGln biosynthesis via transamidation"/>
    <property type="evidence" value="ECO:0007669"/>
    <property type="project" value="TreeGrafter"/>
</dbReference>
<dbReference type="GO" id="GO:0006412">
    <property type="term" value="P:translation"/>
    <property type="evidence" value="ECO:0007669"/>
    <property type="project" value="UniProtKB-UniRule"/>
</dbReference>
<dbReference type="FunFam" id="1.10.10.410:FF:000001">
    <property type="entry name" value="Aspartyl/glutamyl-tRNA(Asn/Gln) amidotransferase subunit B"/>
    <property type="match status" value="1"/>
</dbReference>
<dbReference type="Gene3D" id="1.10.10.410">
    <property type="match status" value="1"/>
</dbReference>
<dbReference type="Gene3D" id="1.10.150.380">
    <property type="entry name" value="GatB domain, N-terminal subdomain"/>
    <property type="match status" value="1"/>
</dbReference>
<dbReference type="HAMAP" id="MF_00121">
    <property type="entry name" value="GatB"/>
    <property type="match status" value="1"/>
</dbReference>
<dbReference type="InterPro" id="IPR017959">
    <property type="entry name" value="Asn/Gln-tRNA_amidoTrfase_suB/E"/>
</dbReference>
<dbReference type="InterPro" id="IPR006075">
    <property type="entry name" value="Asn/Gln-tRNA_Trfase_suB/E_cat"/>
</dbReference>
<dbReference type="InterPro" id="IPR018027">
    <property type="entry name" value="Asn/Gln_amidotransferase"/>
</dbReference>
<dbReference type="InterPro" id="IPR003789">
    <property type="entry name" value="Asn/Gln_tRNA_amidoTrase-B-like"/>
</dbReference>
<dbReference type="InterPro" id="IPR004413">
    <property type="entry name" value="GatB"/>
</dbReference>
<dbReference type="InterPro" id="IPR042114">
    <property type="entry name" value="GatB_C_1"/>
</dbReference>
<dbReference type="InterPro" id="IPR023168">
    <property type="entry name" value="GatB_Yqey_C_2"/>
</dbReference>
<dbReference type="InterPro" id="IPR017958">
    <property type="entry name" value="Gln-tRNA_amidoTrfase_suB_CS"/>
</dbReference>
<dbReference type="InterPro" id="IPR014746">
    <property type="entry name" value="Gln_synth/guanido_kin_cat_dom"/>
</dbReference>
<dbReference type="NCBIfam" id="TIGR00133">
    <property type="entry name" value="gatB"/>
    <property type="match status" value="1"/>
</dbReference>
<dbReference type="NCBIfam" id="NF004012">
    <property type="entry name" value="PRK05477.1-2"/>
    <property type="match status" value="1"/>
</dbReference>
<dbReference type="NCBIfam" id="NF004014">
    <property type="entry name" value="PRK05477.1-4"/>
    <property type="match status" value="1"/>
</dbReference>
<dbReference type="PANTHER" id="PTHR11659">
    <property type="entry name" value="GLUTAMYL-TRNA GLN AMIDOTRANSFERASE SUBUNIT B MITOCHONDRIAL AND PROKARYOTIC PET112-RELATED"/>
    <property type="match status" value="1"/>
</dbReference>
<dbReference type="PANTHER" id="PTHR11659:SF0">
    <property type="entry name" value="GLUTAMYL-TRNA(GLN) AMIDOTRANSFERASE SUBUNIT B, MITOCHONDRIAL"/>
    <property type="match status" value="1"/>
</dbReference>
<dbReference type="Pfam" id="PF02934">
    <property type="entry name" value="GatB_N"/>
    <property type="match status" value="1"/>
</dbReference>
<dbReference type="Pfam" id="PF02637">
    <property type="entry name" value="GatB_Yqey"/>
    <property type="match status" value="1"/>
</dbReference>
<dbReference type="SMART" id="SM00845">
    <property type="entry name" value="GatB_Yqey"/>
    <property type="match status" value="1"/>
</dbReference>
<dbReference type="SUPFAM" id="SSF89095">
    <property type="entry name" value="GatB/YqeY motif"/>
    <property type="match status" value="1"/>
</dbReference>
<dbReference type="SUPFAM" id="SSF55931">
    <property type="entry name" value="Glutamine synthetase/guanido kinase"/>
    <property type="match status" value="1"/>
</dbReference>
<dbReference type="PROSITE" id="PS01234">
    <property type="entry name" value="GATB"/>
    <property type="match status" value="1"/>
</dbReference>
<feature type="chain" id="PRO_1000122543" description="Aspartyl/glutamyl-tRNA(Asn/Gln) amidotransferase subunit B">
    <location>
        <begin position="1"/>
        <end position="483"/>
    </location>
</feature>
<proteinExistence type="inferred from homology"/>
<sequence length="483" mass="54102">MEFETVIGLEVHAQLLTRSKMFCGCSADYAGAPPNTHVCPVCLGLPGSLPVINRRAVEMTVMTGLALGCRIPPYSKFDRKNYMYPDLPKGYQISQYDLPLCVDGALEFLVDGQRRRVRIRRVHLEEDTARLVHRTVAGESYSLVDMNRSGVPLIEIVTEPDLHSPEEARLFLQSLRQVLRYLGVSTGNMEEGAFRCDANISQRTVDGQQQWPKAEIKNLNSFRSVERALAYEEQRQRAAIRRGERLVQETRGWLEDQGITVTQRAKEYPDDYRYFPEPDLPPIFLTEDDLARIRAAMPELPLARWERFQVEYGLGPQEAALLTEERAVADFFEACVAGDRTLAREAANWITGELFALMRERGCGISEVGVQPRQLRQLIELVQRGTISTLTAKELLGAVSETGTDPEVLVAERGLAQVSDEAQLRAIVQRVLAENPKAVADYRKGKTAAIGFLLGQVNRALAGRANPAVARRLLEEALQQPVE</sequence>
<protein>
    <recommendedName>
        <fullName evidence="1">Aspartyl/glutamyl-tRNA(Asn/Gln) amidotransferase subunit B</fullName>
        <shortName evidence="1">Asp/Glu-ADT subunit B</shortName>
        <ecNumber evidence="1">6.3.5.-</ecNumber>
    </recommendedName>
</protein>
<keyword id="KW-0067">ATP-binding</keyword>
<keyword id="KW-0436">Ligase</keyword>
<keyword id="KW-0547">Nucleotide-binding</keyword>
<keyword id="KW-0648">Protein biosynthesis</keyword>
<keyword id="KW-1185">Reference proteome</keyword>
<accession>B9KZK4</accession>
<organism>
    <name type="scientific">Thermomicrobium roseum (strain ATCC 27502 / DSM 5159 / P-2)</name>
    <dbReference type="NCBI Taxonomy" id="309801"/>
    <lineage>
        <taxon>Bacteria</taxon>
        <taxon>Pseudomonadati</taxon>
        <taxon>Thermomicrobiota</taxon>
        <taxon>Thermomicrobia</taxon>
        <taxon>Thermomicrobiales</taxon>
        <taxon>Thermomicrobiaceae</taxon>
        <taxon>Thermomicrobium</taxon>
    </lineage>
</organism>
<comment type="function">
    <text evidence="1">Allows the formation of correctly charged Asn-tRNA(Asn) or Gln-tRNA(Gln) through the transamidation of misacylated Asp-tRNA(Asn) or Glu-tRNA(Gln) in organisms which lack either or both of asparaginyl-tRNA or glutaminyl-tRNA synthetases. The reaction takes place in the presence of glutamine and ATP through an activated phospho-Asp-tRNA(Asn) or phospho-Glu-tRNA(Gln).</text>
</comment>
<comment type="catalytic activity">
    <reaction evidence="1">
        <text>L-glutamyl-tRNA(Gln) + L-glutamine + ATP + H2O = L-glutaminyl-tRNA(Gln) + L-glutamate + ADP + phosphate + H(+)</text>
        <dbReference type="Rhea" id="RHEA:17521"/>
        <dbReference type="Rhea" id="RHEA-COMP:9681"/>
        <dbReference type="Rhea" id="RHEA-COMP:9684"/>
        <dbReference type="ChEBI" id="CHEBI:15377"/>
        <dbReference type="ChEBI" id="CHEBI:15378"/>
        <dbReference type="ChEBI" id="CHEBI:29985"/>
        <dbReference type="ChEBI" id="CHEBI:30616"/>
        <dbReference type="ChEBI" id="CHEBI:43474"/>
        <dbReference type="ChEBI" id="CHEBI:58359"/>
        <dbReference type="ChEBI" id="CHEBI:78520"/>
        <dbReference type="ChEBI" id="CHEBI:78521"/>
        <dbReference type="ChEBI" id="CHEBI:456216"/>
    </reaction>
</comment>
<comment type="catalytic activity">
    <reaction evidence="1">
        <text>L-aspartyl-tRNA(Asn) + L-glutamine + ATP + H2O = L-asparaginyl-tRNA(Asn) + L-glutamate + ADP + phosphate + 2 H(+)</text>
        <dbReference type="Rhea" id="RHEA:14513"/>
        <dbReference type="Rhea" id="RHEA-COMP:9674"/>
        <dbReference type="Rhea" id="RHEA-COMP:9677"/>
        <dbReference type="ChEBI" id="CHEBI:15377"/>
        <dbReference type="ChEBI" id="CHEBI:15378"/>
        <dbReference type="ChEBI" id="CHEBI:29985"/>
        <dbReference type="ChEBI" id="CHEBI:30616"/>
        <dbReference type="ChEBI" id="CHEBI:43474"/>
        <dbReference type="ChEBI" id="CHEBI:58359"/>
        <dbReference type="ChEBI" id="CHEBI:78515"/>
        <dbReference type="ChEBI" id="CHEBI:78516"/>
        <dbReference type="ChEBI" id="CHEBI:456216"/>
    </reaction>
</comment>
<comment type="subunit">
    <text evidence="1">Heterotrimer of A, B and C subunits.</text>
</comment>
<comment type="similarity">
    <text evidence="1">Belongs to the GatB/GatE family. GatB subfamily.</text>
</comment>
<reference key="1">
    <citation type="journal article" date="2009" name="PLoS ONE">
        <title>Complete genome sequence of the aerobic CO-oxidizing thermophile Thermomicrobium roseum.</title>
        <authorList>
            <person name="Wu D."/>
            <person name="Raymond J."/>
            <person name="Wu M."/>
            <person name="Chatterji S."/>
            <person name="Ren Q."/>
            <person name="Graham J.E."/>
            <person name="Bryant D.A."/>
            <person name="Robb F."/>
            <person name="Colman A."/>
            <person name="Tallon L.J."/>
            <person name="Badger J.H."/>
            <person name="Madupu R."/>
            <person name="Ward N.L."/>
            <person name="Eisen J.A."/>
        </authorList>
    </citation>
    <scope>NUCLEOTIDE SEQUENCE [LARGE SCALE GENOMIC DNA]</scope>
    <source>
        <strain>ATCC 27502 / DSM 5159 / P-2</strain>
    </source>
</reference>
<gene>
    <name evidence="1" type="primary">gatB</name>
    <name type="ordered locus">trd_1474</name>
</gene>
<evidence type="ECO:0000255" key="1">
    <source>
        <dbReference type="HAMAP-Rule" id="MF_00121"/>
    </source>
</evidence>
<name>GATB_THERP</name>